<comment type="function">
    <text evidence="1">Specifically methylates position 8 of adenine 2503 in 23S rRNA. Confers resistance to some classes of antibiotics.</text>
</comment>
<comment type="catalytic activity">
    <reaction evidence="1">
        <text>adenosine(2503) in 23S rRNA + 2 reduced [2Fe-2S]-[ferredoxin] + 2 S-adenosyl-L-methionine = 8-methyladenosine(2503) in 23S rRNA + 5'-deoxyadenosine + L-methionine + 2 oxidized [2Fe-2S]-[ferredoxin] + S-adenosyl-L-homocysteine</text>
        <dbReference type="Rhea" id="RHEA:42632"/>
        <dbReference type="Rhea" id="RHEA-COMP:10000"/>
        <dbReference type="Rhea" id="RHEA-COMP:10001"/>
        <dbReference type="Rhea" id="RHEA-COMP:10152"/>
        <dbReference type="Rhea" id="RHEA-COMP:10153"/>
        <dbReference type="ChEBI" id="CHEBI:17319"/>
        <dbReference type="ChEBI" id="CHEBI:33737"/>
        <dbReference type="ChEBI" id="CHEBI:33738"/>
        <dbReference type="ChEBI" id="CHEBI:57844"/>
        <dbReference type="ChEBI" id="CHEBI:57856"/>
        <dbReference type="ChEBI" id="CHEBI:59789"/>
        <dbReference type="ChEBI" id="CHEBI:74411"/>
        <dbReference type="ChEBI" id="CHEBI:74543"/>
        <dbReference type="EC" id="2.1.1.224"/>
    </reaction>
</comment>
<comment type="cofactor">
    <cofactor evidence="1">
        <name>[4Fe-4S] cluster</name>
        <dbReference type="ChEBI" id="CHEBI:49883"/>
    </cofactor>
    <text evidence="1">Binds 1 [4Fe-4S] cluster. The cluster is coordinated with 3 cysteines and an exchangeable S-adenosyl-L-methionine.</text>
</comment>
<comment type="subcellular location">
    <subcellularLocation>
        <location evidence="1">Cytoplasm</location>
    </subcellularLocation>
</comment>
<comment type="miscellaneous">
    <text evidence="1">Reaction proceeds by a ping-pong mechanism involving intermediate methylation of a conserved cysteine residue.</text>
</comment>
<comment type="similarity">
    <text evidence="1">Belongs to the radical SAM superfamily. RlmN family. Cfr subfamily.</text>
</comment>
<accession>A7FX96</accession>
<name>CFR_CLOB1</name>
<gene>
    <name evidence="1" type="primary">cfr</name>
    <name type="ordered locus">CLB_2801</name>
</gene>
<organism>
    <name type="scientific">Clostridium botulinum (strain ATCC 19397 / Type A)</name>
    <dbReference type="NCBI Taxonomy" id="441770"/>
    <lineage>
        <taxon>Bacteria</taxon>
        <taxon>Bacillati</taxon>
        <taxon>Bacillota</taxon>
        <taxon>Clostridia</taxon>
        <taxon>Eubacteriales</taxon>
        <taxon>Clostridiaceae</taxon>
        <taxon>Clostridium</taxon>
    </lineage>
</organism>
<protein>
    <recommendedName>
        <fullName evidence="1">Ribosomal RNA large subunit methyltransferase Cfr</fullName>
        <ecNumber evidence="1">2.1.1.224</ecNumber>
    </recommendedName>
    <alternativeName>
        <fullName evidence="1">23S rRNA (adenine(2503)-C(8))-methyltransferase</fullName>
    </alternativeName>
    <alternativeName>
        <fullName evidence="1">23S rRNA m8A2503 methyltransferase</fullName>
    </alternativeName>
</protein>
<dbReference type="EC" id="2.1.1.224" evidence="1"/>
<dbReference type="EMBL" id="CP000726">
    <property type="protein sequence ID" value="ABS35021.1"/>
    <property type="molecule type" value="Genomic_DNA"/>
</dbReference>
<dbReference type="RefSeq" id="WP_011987126.1">
    <property type="nucleotide sequence ID" value="NC_009697.1"/>
</dbReference>
<dbReference type="SMR" id="A7FX96"/>
<dbReference type="KEGG" id="cba:CLB_2801"/>
<dbReference type="HOGENOM" id="CLU_029101_0_2_9"/>
<dbReference type="GO" id="GO:0005737">
    <property type="term" value="C:cytoplasm"/>
    <property type="evidence" value="ECO:0007669"/>
    <property type="project" value="UniProtKB-SubCell"/>
</dbReference>
<dbReference type="GO" id="GO:0051539">
    <property type="term" value="F:4 iron, 4 sulfur cluster binding"/>
    <property type="evidence" value="ECO:0007669"/>
    <property type="project" value="UniProtKB-UniRule"/>
</dbReference>
<dbReference type="GO" id="GO:0046872">
    <property type="term" value="F:metal ion binding"/>
    <property type="evidence" value="ECO:0007669"/>
    <property type="project" value="UniProtKB-KW"/>
</dbReference>
<dbReference type="GO" id="GO:0016433">
    <property type="term" value="F:rRNA (adenine) methyltransferase activity"/>
    <property type="evidence" value="ECO:0007669"/>
    <property type="project" value="UniProtKB-UniRule"/>
</dbReference>
<dbReference type="GO" id="GO:0019843">
    <property type="term" value="F:rRNA binding"/>
    <property type="evidence" value="ECO:0007669"/>
    <property type="project" value="UniProtKB-UniRule"/>
</dbReference>
<dbReference type="GO" id="GO:0046677">
    <property type="term" value="P:response to antibiotic"/>
    <property type="evidence" value="ECO:0007669"/>
    <property type="project" value="UniProtKB-KW"/>
</dbReference>
<dbReference type="GO" id="GO:0070475">
    <property type="term" value="P:rRNA base methylation"/>
    <property type="evidence" value="ECO:0007669"/>
    <property type="project" value="UniProtKB-UniRule"/>
</dbReference>
<dbReference type="GO" id="GO:0030488">
    <property type="term" value="P:tRNA methylation"/>
    <property type="evidence" value="ECO:0007669"/>
    <property type="project" value="TreeGrafter"/>
</dbReference>
<dbReference type="CDD" id="cd01335">
    <property type="entry name" value="Radical_SAM"/>
    <property type="match status" value="1"/>
</dbReference>
<dbReference type="FunFam" id="3.20.20.70:FF:000014">
    <property type="entry name" value="Probable dual-specificity RNA methyltransferase RlmN"/>
    <property type="match status" value="1"/>
</dbReference>
<dbReference type="Gene3D" id="1.10.150.530">
    <property type="match status" value="1"/>
</dbReference>
<dbReference type="Gene3D" id="3.20.20.70">
    <property type="entry name" value="Aldolase class I"/>
    <property type="match status" value="1"/>
</dbReference>
<dbReference type="HAMAP" id="MF_01873">
    <property type="entry name" value="23SrRNA_methyltr_Cfr"/>
    <property type="match status" value="1"/>
</dbReference>
<dbReference type="InterPro" id="IPR013785">
    <property type="entry name" value="Aldolase_TIM"/>
</dbReference>
<dbReference type="InterPro" id="IPR040072">
    <property type="entry name" value="Methyltransferase_A"/>
</dbReference>
<dbReference type="InterPro" id="IPR022881">
    <property type="entry name" value="rRNA_lsu_MeTfrase_Cfr"/>
</dbReference>
<dbReference type="InterPro" id="IPR004383">
    <property type="entry name" value="rRNA_lsu_MTrfase_RlmN/Cfr"/>
</dbReference>
<dbReference type="InterPro" id="IPR007197">
    <property type="entry name" value="rSAM"/>
</dbReference>
<dbReference type="NCBIfam" id="NF000424">
    <property type="entry name" value="CfrAB"/>
    <property type="match status" value="1"/>
</dbReference>
<dbReference type="NCBIfam" id="NF011024">
    <property type="entry name" value="PRK14453.1"/>
    <property type="match status" value="1"/>
</dbReference>
<dbReference type="NCBIfam" id="TIGR04432">
    <property type="entry name" value="rSAM_Cfr"/>
    <property type="match status" value="1"/>
</dbReference>
<dbReference type="PANTHER" id="PTHR30544">
    <property type="entry name" value="23S RRNA METHYLTRANSFERASE"/>
    <property type="match status" value="1"/>
</dbReference>
<dbReference type="PANTHER" id="PTHR30544:SF5">
    <property type="entry name" value="RADICAL SAM CORE DOMAIN-CONTAINING PROTEIN"/>
    <property type="match status" value="1"/>
</dbReference>
<dbReference type="Pfam" id="PF04055">
    <property type="entry name" value="Radical_SAM"/>
    <property type="match status" value="1"/>
</dbReference>
<dbReference type="PIRSF" id="PIRSF006004">
    <property type="entry name" value="CHP00048"/>
    <property type="match status" value="1"/>
</dbReference>
<dbReference type="SFLD" id="SFLDF00275">
    <property type="entry name" value="adenosine_C2_methyltransferase"/>
    <property type="match status" value="1"/>
</dbReference>
<dbReference type="SFLD" id="SFLDF00296">
    <property type="entry name" value="adenosine_C8_methyltransferase"/>
    <property type="match status" value="1"/>
</dbReference>
<dbReference type="SFLD" id="SFLDS00029">
    <property type="entry name" value="Radical_SAM"/>
    <property type="match status" value="1"/>
</dbReference>
<dbReference type="SUPFAM" id="SSF102114">
    <property type="entry name" value="Radical SAM enzymes"/>
    <property type="match status" value="1"/>
</dbReference>
<dbReference type="PROSITE" id="PS51918">
    <property type="entry name" value="RADICAL_SAM"/>
    <property type="match status" value="1"/>
</dbReference>
<keyword id="KW-0004">4Fe-4S</keyword>
<keyword id="KW-0046">Antibiotic resistance</keyword>
<keyword id="KW-0963">Cytoplasm</keyword>
<keyword id="KW-1015">Disulfide bond</keyword>
<keyword id="KW-0408">Iron</keyword>
<keyword id="KW-0411">Iron-sulfur</keyword>
<keyword id="KW-0479">Metal-binding</keyword>
<keyword id="KW-0489">Methyltransferase</keyword>
<keyword id="KW-0698">rRNA processing</keyword>
<keyword id="KW-0949">S-adenosyl-L-methionine</keyword>
<keyword id="KW-0808">Transferase</keyword>
<feature type="chain" id="PRO_0000350114" description="Ribosomal RNA large subunit methyltransferase Cfr">
    <location>
        <begin position="1"/>
        <end position="344"/>
    </location>
</feature>
<feature type="domain" description="Radical SAM core" evidence="2">
    <location>
        <begin position="97"/>
        <end position="330"/>
    </location>
</feature>
<feature type="active site" description="Proton acceptor" evidence="1">
    <location>
        <position position="90"/>
    </location>
</feature>
<feature type="active site" description="S-methylcysteine intermediate" evidence="1">
    <location>
        <position position="335"/>
    </location>
</feature>
<feature type="binding site" evidence="1">
    <location>
        <position position="111"/>
    </location>
    <ligand>
        <name>[4Fe-4S] cluster</name>
        <dbReference type="ChEBI" id="CHEBI:49883"/>
        <note>4Fe-4S-S-AdoMet</note>
    </ligand>
</feature>
<feature type="binding site" evidence="1">
    <location>
        <position position="115"/>
    </location>
    <ligand>
        <name>[4Fe-4S] cluster</name>
        <dbReference type="ChEBI" id="CHEBI:49883"/>
        <note>4Fe-4S-S-AdoMet</note>
    </ligand>
</feature>
<feature type="binding site" evidence="1">
    <location>
        <position position="118"/>
    </location>
    <ligand>
        <name>[4Fe-4S] cluster</name>
        <dbReference type="ChEBI" id="CHEBI:49883"/>
        <note>4Fe-4S-S-AdoMet</note>
    </ligand>
</feature>
<feature type="binding site" evidence="1">
    <location>
        <begin position="157"/>
        <end position="158"/>
    </location>
    <ligand>
        <name>S-adenosyl-L-methionine</name>
        <dbReference type="ChEBI" id="CHEBI:59789"/>
    </ligand>
</feature>
<feature type="binding site" evidence="1">
    <location>
        <position position="188"/>
    </location>
    <ligand>
        <name>S-adenosyl-L-methionine</name>
        <dbReference type="ChEBI" id="CHEBI:59789"/>
    </ligand>
</feature>
<feature type="binding site" evidence="1">
    <location>
        <begin position="211"/>
        <end position="213"/>
    </location>
    <ligand>
        <name>S-adenosyl-L-methionine</name>
        <dbReference type="ChEBI" id="CHEBI:59789"/>
    </ligand>
</feature>
<feature type="binding site" evidence="1">
    <location>
        <position position="292"/>
    </location>
    <ligand>
        <name>S-adenosyl-L-methionine</name>
        <dbReference type="ChEBI" id="CHEBI:59789"/>
    </ligand>
</feature>
<feature type="disulfide bond" description="(transient)" evidence="1">
    <location>
        <begin position="104"/>
        <end position="335"/>
    </location>
</feature>
<proteinExistence type="inferred from homology"/>
<reference key="1">
    <citation type="journal article" date="2007" name="PLoS ONE">
        <title>Analysis of the neurotoxin complex genes in Clostridium botulinum A1-A4 and B1 strains: BoNT/A3, /Ba4 and /B1 clusters are located within plasmids.</title>
        <authorList>
            <person name="Smith T.J."/>
            <person name="Hill K.K."/>
            <person name="Foley B.T."/>
            <person name="Detter J.C."/>
            <person name="Munk A.C."/>
            <person name="Bruce D.C."/>
            <person name="Doggett N.A."/>
            <person name="Smith L.A."/>
            <person name="Marks J.D."/>
            <person name="Xie G."/>
            <person name="Brettin T.S."/>
        </authorList>
    </citation>
    <scope>NUCLEOTIDE SEQUENCE [LARGE SCALE GENOMIC DNA]</scope>
    <source>
        <strain>ATCC 19397 / Type A</strain>
    </source>
</reference>
<sequence length="344" mass="39161">MKQTKTKYGKMKQIASNLKLPDYRYEQLTKAIFHQRIDNFHDMHILPKALRIALVNEFGKNVSSVTPIFSQDSKQAQKLLFELTDGERIEAVGLKYKQGWESFCISSQCGCSFGCRFCATGSAGFKRNLTADEITDQLLYFYFNDHRLNSISFMGMGEAFANPELFDAVKILTDQNLFGLSQRRITISTIGIIPGIQRLTKEFPQVNLAFSLHSPFESQRSDLMPINKRFPLNEVMKTLDEHIIHTGRRVFIAYIMLEGINDSKEHAEAIIGLLRNRGSWEHLYHIDLIPYNSTDKTTFKFQSSSAIKQFCSTLKKASISATVRTQFGSEISAACGQLCYENEL</sequence>
<evidence type="ECO:0000255" key="1">
    <source>
        <dbReference type="HAMAP-Rule" id="MF_01873"/>
    </source>
</evidence>
<evidence type="ECO:0000255" key="2">
    <source>
        <dbReference type="PROSITE-ProRule" id="PRU01266"/>
    </source>
</evidence>